<sequence>MLTALQADLASVVEGVNLVWVLTVTFLIFFMHAGFAMLEAGQVRAKNVANQLTKNLLTWSIGVIVFFLLGAAVSAIVAGLTGGPATTVADAFMGLYAPDASATTAWVDWLFGAVFAMTAATIVSGAVAGRARLRAYLTYTILIAGVIYPVVVGVTWAGGFLNGLGFHDFAGGMIVHGMGGIAGLTAAWIIGPRMNRFNADGSANVIPGHSITFAVLGTLILAFGWYGFNVGTAAAPLAYSDGGVTLGSFAYVGRVALVTTLGMAAGALGAGGVAFYKTGKVDTLYVANGVLAGLVGITAIADDIVWPGALVVGLLAGAQLPIVFEFVEKRLRIDDVCAVFPVHGSAGVLGTLLYPVFAVPVWHEGASIVSLAVPQVVGVGVIAVWTFVATTAIFGGFRAIGQVRVSADHERQGLDTAEHGVDTYPEFGSPDADTGIRADGSGIPYGHGFMTTQEDE</sequence>
<accession>B8ZYW3</accession>
<comment type="function">
    <text evidence="2">Involved in the uptake of ammonium/ammonia (NH(4)(+)/NH(3)) (By similarity). Transport is electrogenic (By similarity).</text>
</comment>
<comment type="subunit">
    <text evidence="1 2">Homotrimer (By similarity). Interacts with both GlnK1 and GlnK2 after ammonium shock (By similarity).</text>
</comment>
<comment type="subcellular location">
    <subcellularLocation>
        <location evidence="8">Cell membrane</location>
        <topology evidence="4">Multi-pass membrane protein</topology>
    </subcellularLocation>
</comment>
<comment type="induction">
    <text evidence="5">Expressed during ammonium starvation under nitrate-rich conditions.</text>
</comment>
<comment type="similarity">
    <text evidence="8">Belongs to the ammonia transporter channel (TC 1.A.11.2) family.</text>
</comment>
<reference key="1">
    <citation type="submission" date="2009-01" db="EMBL/GenBank/DDBJ databases">
        <title>Overexpression and characterization of an ammonium transporter from Haloferax mediterranei.</title>
        <authorList>
            <person name="Camacho M."/>
            <person name="Pedro-Roig L."/>
            <person name="Bonete M.J."/>
        </authorList>
    </citation>
    <scope>NUCLEOTIDE SEQUENCE [GENOMIC DNA]</scope>
    <source>
        <strain>ATCC 33500 / DSM 1411 / JCM 8866 / NBRC 14739 / NCIMB 2177 / R-4</strain>
    </source>
</reference>
<reference key="2">
    <citation type="journal article" date="2012" name="J. Bacteriol.">
        <title>Complete genome sequence of the metabolically versatile halophilic archaeon Haloferax mediterranei, a poly(3-hydroxybutyrate-co-3-hydroxyvalerate) producer.</title>
        <authorList>
            <person name="Han J."/>
            <person name="Zhang F."/>
            <person name="Hou J."/>
            <person name="Liu X."/>
            <person name="Li M."/>
            <person name="Liu H."/>
            <person name="Cai L."/>
            <person name="Zhang B."/>
            <person name="Chen Y."/>
            <person name="Zhou J."/>
            <person name="Hu S."/>
            <person name="Xiang H."/>
        </authorList>
    </citation>
    <scope>NUCLEOTIDE SEQUENCE [LARGE SCALE GENOMIC DNA]</scope>
    <source>
        <strain>ATCC 33500 / DSM 1411 / JCM 8866 / NBRC 14739 / NCIMB 2177 / R-4</strain>
    </source>
</reference>
<reference key="3">
    <citation type="journal article" date="2014" name="PLoS Genet.">
        <title>Phylogenetically driven sequencing of extremely halophilic archaea reveals strategies for static and dynamic osmo-response.</title>
        <authorList>
            <person name="Becker E.A."/>
            <person name="Seitzer P.M."/>
            <person name="Tritt A."/>
            <person name="Larsen D."/>
            <person name="Krusor M."/>
            <person name="Yao A.I."/>
            <person name="Wu D."/>
            <person name="Madern D."/>
            <person name="Eisen J.A."/>
            <person name="Darling A.E."/>
            <person name="Facciotti M.T."/>
        </authorList>
    </citation>
    <scope>NUCLEOTIDE SEQUENCE [LARGE SCALE GENOMIC DNA]</scope>
    <source>
        <strain>ATCC 33500 / DSM 1411 / JCM 8866 / NBRC 14739 / NCIMB 2177 / R-4</strain>
    </source>
</reference>
<reference key="4">
    <citation type="submission" date="2014-04" db="EMBL/GenBank/DDBJ databases">
        <title>Transcriptional profiles of Haloferax mediterranei on the basis of nitrogen availability.</title>
        <authorList>
            <person name="Bautista V."/>
        </authorList>
    </citation>
    <scope>NUCLEOTIDE SEQUENCE [LARGE SCALE GENOMIC DNA]</scope>
    <source>
        <strain>ATCC 33500 / DSM 1411 / JCM 8866 / NBRC 14739 / NCIMB 2177 / R-4</strain>
    </source>
</reference>
<reference key="5">
    <citation type="submission" date="2019-04" db="EMBL/GenBank/DDBJ databases">
        <title>Methylomes of two halophilic Archaea, Haloarcula marismortui and Haloferax mediterranei.</title>
        <authorList>
            <person name="DasSarma S."/>
            <person name="DasSarma P."/>
            <person name="DasSarma S."/>
            <person name="Fomenkov A."/>
            <person name="Vincze T."/>
            <person name="Anton B.P."/>
            <person name="Roberts R.J."/>
        </authorList>
    </citation>
    <scope>NUCLEOTIDE SEQUENCE [LARGE SCALE GENOMIC DNA]</scope>
    <source>
        <strain>ATCC 33500 / DSM 1411 / JCM 8866 / NBRC 14739 / NCIMB 2177 / R-4</strain>
    </source>
</reference>
<reference key="6">
    <citation type="journal article" date="2013" name="MicrobiologyOpen">
        <title>Nitrogen regulation of protein-protein interactions and transcript levels of GlnK PII regulator and AmtB ammonium transporter homologs in Archaea.</title>
        <authorList>
            <person name="Pedro-Roig L."/>
            <person name="Lange C."/>
            <person name="Bonete M.J."/>
            <person name="Soppa J."/>
            <person name="Maupin-Furlow J."/>
        </authorList>
    </citation>
    <scope>INDUCTION</scope>
    <source>
        <strain>ATCC 33500 / DSM 1411 / JCM 8866 / NBRC 14739 / NCIMB 2177 / R-4</strain>
    </source>
</reference>
<proteinExistence type="evidence at transcript level"/>
<name>AMT2_HALMT</name>
<organism>
    <name type="scientific">Haloferax mediterranei (strain ATCC 33500 / DSM 1411 / JCM 8866 / NBRC 14739 / NCIMB 2177 / R-4)</name>
    <name type="common">Halobacterium mediterranei</name>
    <dbReference type="NCBI Taxonomy" id="523841"/>
    <lineage>
        <taxon>Archaea</taxon>
        <taxon>Methanobacteriati</taxon>
        <taxon>Methanobacteriota</taxon>
        <taxon>Stenosarchaea group</taxon>
        <taxon>Halobacteria</taxon>
        <taxon>Halobacteriales</taxon>
        <taxon>Haloferacaceae</taxon>
        <taxon>Haloferax</taxon>
    </lineage>
</organism>
<gene>
    <name evidence="7" type="primary">amt2</name>
    <name evidence="6" type="synonym">amtB2</name>
    <name evidence="9" type="ordered locus">HFX_0093</name>
    <name evidence="10" type="ORF">BM92_08820</name>
    <name evidence="11" type="ORF">C439_09925</name>
    <name evidence="12" type="ORF">E6P09_03560</name>
</gene>
<dbReference type="EMBL" id="FM991874">
    <property type="protein sequence ID" value="CAX20373.1"/>
    <property type="molecule type" value="Genomic_DNA"/>
</dbReference>
<dbReference type="EMBL" id="CP001868">
    <property type="protein sequence ID" value="AFK17835.1"/>
    <property type="molecule type" value="Genomic_DNA"/>
</dbReference>
<dbReference type="EMBL" id="AOLO01000007">
    <property type="protein sequence ID" value="EMA02892.1"/>
    <property type="molecule type" value="Genomic_DNA"/>
</dbReference>
<dbReference type="EMBL" id="CP007551">
    <property type="protein sequence ID" value="AHZ22739.1"/>
    <property type="molecule type" value="Genomic_DNA"/>
</dbReference>
<dbReference type="EMBL" id="CP039139">
    <property type="protein sequence ID" value="QCQ74396.1"/>
    <property type="molecule type" value="Genomic_DNA"/>
</dbReference>
<dbReference type="RefSeq" id="WP_004058650.1">
    <property type="nucleotide sequence ID" value="NC_017941.2"/>
</dbReference>
<dbReference type="SMR" id="B8ZYW3"/>
<dbReference type="STRING" id="523841.HFX_0093"/>
<dbReference type="PaxDb" id="523841-HFX_0093"/>
<dbReference type="GeneID" id="40155463"/>
<dbReference type="KEGG" id="hme:HFX_0093"/>
<dbReference type="PATRIC" id="fig|523841.21.peg.2018"/>
<dbReference type="eggNOG" id="arCOG04397">
    <property type="taxonomic scope" value="Archaea"/>
</dbReference>
<dbReference type="HOGENOM" id="CLU_000445_33_1_2"/>
<dbReference type="OrthoDB" id="10960at2157"/>
<dbReference type="Proteomes" id="UP000006469">
    <property type="component" value="Chromosome"/>
</dbReference>
<dbReference type="Proteomes" id="UP000011603">
    <property type="component" value="Unassembled WGS sequence"/>
</dbReference>
<dbReference type="Proteomes" id="UP000027075">
    <property type="component" value="Chromosome"/>
</dbReference>
<dbReference type="Proteomes" id="UP000299011">
    <property type="component" value="Chromosome"/>
</dbReference>
<dbReference type="GO" id="GO:0005886">
    <property type="term" value="C:plasma membrane"/>
    <property type="evidence" value="ECO:0007669"/>
    <property type="project" value="UniProtKB-SubCell"/>
</dbReference>
<dbReference type="GO" id="GO:0008519">
    <property type="term" value="F:ammonium channel activity"/>
    <property type="evidence" value="ECO:0007669"/>
    <property type="project" value="InterPro"/>
</dbReference>
<dbReference type="GO" id="GO:0097272">
    <property type="term" value="P:ammonium homeostasis"/>
    <property type="evidence" value="ECO:0007669"/>
    <property type="project" value="TreeGrafter"/>
</dbReference>
<dbReference type="Gene3D" id="1.10.3430.10">
    <property type="entry name" value="Ammonium transporter AmtB like domains"/>
    <property type="match status" value="1"/>
</dbReference>
<dbReference type="InterPro" id="IPR029020">
    <property type="entry name" value="Ammonium/urea_transptr"/>
</dbReference>
<dbReference type="InterPro" id="IPR018047">
    <property type="entry name" value="Ammonium_transpt_CS"/>
</dbReference>
<dbReference type="InterPro" id="IPR024041">
    <property type="entry name" value="NH4_transpt_AmtB-like_dom"/>
</dbReference>
<dbReference type="PANTHER" id="PTHR11730">
    <property type="entry name" value="AMMONIUM TRANSPORTER"/>
    <property type="match status" value="1"/>
</dbReference>
<dbReference type="PANTHER" id="PTHR11730:SF6">
    <property type="entry name" value="AMMONIUM TRANSPORTER"/>
    <property type="match status" value="1"/>
</dbReference>
<dbReference type="Pfam" id="PF00909">
    <property type="entry name" value="Ammonium_transp"/>
    <property type="match status" value="1"/>
</dbReference>
<dbReference type="SUPFAM" id="SSF111352">
    <property type="entry name" value="Ammonium transporter"/>
    <property type="match status" value="1"/>
</dbReference>
<dbReference type="PROSITE" id="PS01219">
    <property type="entry name" value="AMMONIUM_TRANSP"/>
    <property type="match status" value="1"/>
</dbReference>
<keyword id="KW-0924">Ammonia transport</keyword>
<keyword id="KW-1003">Cell membrane</keyword>
<keyword id="KW-0472">Membrane</keyword>
<keyword id="KW-0812">Transmembrane</keyword>
<keyword id="KW-1133">Transmembrane helix</keyword>
<keyword id="KW-0813">Transport</keyword>
<feature type="chain" id="PRO_0000453009" description="Ammonium transporter Amt2">
    <location>
        <begin position="1"/>
        <end position="456"/>
    </location>
</feature>
<feature type="transmembrane region" description="Helical" evidence="4">
    <location>
        <begin position="18"/>
        <end position="38"/>
    </location>
</feature>
<feature type="transmembrane region" description="Helical" evidence="4">
    <location>
        <begin position="61"/>
        <end position="81"/>
    </location>
</feature>
<feature type="transmembrane region" description="Helical" evidence="4">
    <location>
        <begin position="109"/>
        <end position="129"/>
    </location>
</feature>
<feature type="transmembrane region" description="Helical" evidence="4">
    <location>
        <begin position="141"/>
        <end position="161"/>
    </location>
</feature>
<feature type="transmembrane region" description="Helical" evidence="4">
    <location>
        <begin position="170"/>
        <end position="190"/>
    </location>
</feature>
<feature type="transmembrane region" description="Helical" evidence="4">
    <location>
        <begin position="211"/>
        <end position="231"/>
    </location>
</feature>
<feature type="transmembrane region" description="Helical" evidence="4">
    <location>
        <begin position="255"/>
        <end position="275"/>
    </location>
</feature>
<feature type="transmembrane region" description="Helical" evidence="4">
    <location>
        <begin position="281"/>
        <end position="301"/>
    </location>
</feature>
<feature type="transmembrane region" description="Helical" evidence="4">
    <location>
        <begin position="304"/>
        <end position="324"/>
    </location>
</feature>
<feature type="transmembrane region" description="Helical" evidence="4">
    <location>
        <begin position="339"/>
        <end position="359"/>
    </location>
</feature>
<feature type="transmembrane region" description="Helical" evidence="4">
    <location>
        <begin position="377"/>
        <end position="397"/>
    </location>
</feature>
<feature type="site" description="Twin-His motif. Important for optimum substrate conductance" evidence="3">
    <location>
        <position position="176"/>
    </location>
</feature>
<feature type="site" description="Twin-His motif. Important for optimum substrate conductance" evidence="3">
    <location>
        <position position="343"/>
    </location>
</feature>
<protein>
    <recommendedName>
        <fullName evidence="8">Ammonium transporter Amt2</fullName>
    </recommendedName>
</protein>
<evidence type="ECO:0000250" key="1">
    <source>
        <dbReference type="UniProtKB" id="I3R0S7"/>
    </source>
</evidence>
<evidence type="ECO:0000250" key="2">
    <source>
        <dbReference type="UniProtKB" id="O29285"/>
    </source>
</evidence>
<evidence type="ECO:0000250" key="3">
    <source>
        <dbReference type="UniProtKB" id="P69681"/>
    </source>
</evidence>
<evidence type="ECO:0000255" key="4"/>
<evidence type="ECO:0000269" key="5">
    <source>
    </source>
</evidence>
<evidence type="ECO:0000303" key="6">
    <source>
    </source>
</evidence>
<evidence type="ECO:0000303" key="7">
    <source ref="1"/>
</evidence>
<evidence type="ECO:0000305" key="8"/>
<evidence type="ECO:0000312" key="9">
    <source>
        <dbReference type="EMBL" id="AFK17835.1"/>
    </source>
</evidence>
<evidence type="ECO:0000312" key="10">
    <source>
        <dbReference type="EMBL" id="AHZ22739.1"/>
    </source>
</evidence>
<evidence type="ECO:0000312" key="11">
    <source>
        <dbReference type="EMBL" id="EMA02892.1"/>
    </source>
</evidence>
<evidence type="ECO:0000312" key="12">
    <source>
        <dbReference type="EMBL" id="QCQ74396.1"/>
    </source>
</evidence>